<reference key="1">
    <citation type="journal article" date="2011" name="J. Bacteriol.">
        <title>Comparative genomics of 28 Salmonella enterica isolates: evidence for CRISPR-mediated adaptive sublineage evolution.</title>
        <authorList>
            <person name="Fricke W.F."/>
            <person name="Mammel M.K."/>
            <person name="McDermott P.F."/>
            <person name="Tartera C."/>
            <person name="White D.G."/>
            <person name="Leclerc J.E."/>
            <person name="Ravel J."/>
            <person name="Cebula T.A."/>
        </authorList>
    </citation>
    <scope>NUCLEOTIDE SEQUENCE [LARGE SCALE GENOMIC DNA]</scope>
    <source>
        <strain>CT_02021853</strain>
    </source>
</reference>
<organism>
    <name type="scientific">Salmonella dublin (strain CT_02021853)</name>
    <dbReference type="NCBI Taxonomy" id="439851"/>
    <lineage>
        <taxon>Bacteria</taxon>
        <taxon>Pseudomonadati</taxon>
        <taxon>Pseudomonadota</taxon>
        <taxon>Gammaproteobacteria</taxon>
        <taxon>Enterobacterales</taxon>
        <taxon>Enterobacteriaceae</taxon>
        <taxon>Salmonella</taxon>
    </lineage>
</organism>
<comment type="function">
    <text evidence="1">Catalyzes the phosphorylation of D-glycero-D-manno-heptose 7-phosphate at the C-1 position to selectively form D-glycero-beta-D-manno-heptose-1,7-bisphosphate.</text>
</comment>
<comment type="function">
    <text evidence="1">Catalyzes the ADP transfer from ATP to D-glycero-beta-D-manno-heptose 1-phosphate, yielding ADP-D-glycero-beta-D-manno-heptose.</text>
</comment>
<comment type="catalytic activity">
    <reaction evidence="1">
        <text>D-glycero-beta-D-manno-heptose 7-phosphate + ATP = D-glycero-beta-D-manno-heptose 1,7-bisphosphate + ADP + H(+)</text>
        <dbReference type="Rhea" id="RHEA:27473"/>
        <dbReference type="ChEBI" id="CHEBI:15378"/>
        <dbReference type="ChEBI" id="CHEBI:30616"/>
        <dbReference type="ChEBI" id="CHEBI:60204"/>
        <dbReference type="ChEBI" id="CHEBI:60208"/>
        <dbReference type="ChEBI" id="CHEBI:456216"/>
        <dbReference type="EC" id="2.7.1.167"/>
    </reaction>
</comment>
<comment type="catalytic activity">
    <reaction evidence="1">
        <text>D-glycero-beta-D-manno-heptose 1-phosphate + ATP + H(+) = ADP-D-glycero-beta-D-manno-heptose + diphosphate</text>
        <dbReference type="Rhea" id="RHEA:27465"/>
        <dbReference type="ChEBI" id="CHEBI:15378"/>
        <dbReference type="ChEBI" id="CHEBI:30616"/>
        <dbReference type="ChEBI" id="CHEBI:33019"/>
        <dbReference type="ChEBI" id="CHEBI:59967"/>
        <dbReference type="ChEBI" id="CHEBI:61593"/>
        <dbReference type="EC" id="2.7.7.70"/>
    </reaction>
</comment>
<comment type="pathway">
    <text evidence="1">Nucleotide-sugar biosynthesis; ADP-L-glycero-beta-D-manno-heptose biosynthesis; ADP-L-glycero-beta-D-manno-heptose from D-glycero-beta-D-manno-heptose 7-phosphate: step 1/4.</text>
</comment>
<comment type="pathway">
    <text evidence="1">Nucleotide-sugar biosynthesis; ADP-L-glycero-beta-D-manno-heptose biosynthesis; ADP-L-glycero-beta-D-manno-heptose from D-glycero-beta-D-manno-heptose 7-phosphate: step 3/4.</text>
</comment>
<comment type="subunit">
    <text evidence="1">Homodimer.</text>
</comment>
<comment type="similarity">
    <text evidence="1">In the N-terminal section; belongs to the carbohydrate kinase PfkB family.</text>
</comment>
<comment type="similarity">
    <text evidence="1">In the C-terminal section; belongs to the cytidylyltransferase family.</text>
</comment>
<sequence length="477" mass="51096">MKVNLPAFERAGVMVVGDVMLDRYWYGPTCRISPEAPVPVVKVNTVEERPGGAANVAMNIASLGANVRLVGLTGIDDAARALSKTLAEVNVKCDFVSVPTHPTITKLRVLSRNQQLIRLDFEEGFEGGDPQPLHERINQALGSIGALVLSDYAKGALTSVQTMISLARQAGVPVLIDPKGTDFERYRGATLLTPNLSEFEAVAGKCKSEDELVERGMKLIADYDLSALLVTRSEQGMTLLQPNKAPLHMPTQAQEVYDVTGAGDTVIGVLAATLAAGNTLEEACYFANAAAGVVVGKLGTSTVSPIELENAVRGRADTGFGVMTEEELRQAVASARKRGEKVVMTNGVFDILHAGHVSYLANARKLGDRLIVAVNSDASTKRLKGDSRPVNPLEQRMIVLGALESVDWVVSFEEDTPQRLIAGILPDLLVKGGDYKPEEIAGSEEVWANGGEVMVLNFEDGCSTTNIIKKIQTESEK</sequence>
<keyword id="KW-0067">ATP-binding</keyword>
<keyword id="KW-0119">Carbohydrate metabolism</keyword>
<keyword id="KW-0418">Kinase</keyword>
<keyword id="KW-0511">Multifunctional enzyme</keyword>
<keyword id="KW-0547">Nucleotide-binding</keyword>
<keyword id="KW-0548">Nucleotidyltransferase</keyword>
<keyword id="KW-0808">Transferase</keyword>
<name>HLDE_SALDC</name>
<dbReference type="EC" id="2.7.1.167" evidence="1"/>
<dbReference type="EC" id="2.7.7.70" evidence="1"/>
<dbReference type="EMBL" id="CP001144">
    <property type="protein sequence ID" value="ACH77329.1"/>
    <property type="molecule type" value="Genomic_DNA"/>
</dbReference>
<dbReference type="RefSeq" id="WP_000867685.1">
    <property type="nucleotide sequence ID" value="NC_011205.1"/>
</dbReference>
<dbReference type="SMR" id="B5FHT5"/>
<dbReference type="KEGG" id="sed:SeD_A3556"/>
<dbReference type="HOGENOM" id="CLU_021150_2_1_6"/>
<dbReference type="UniPathway" id="UPA00356">
    <property type="reaction ID" value="UER00437"/>
</dbReference>
<dbReference type="UniPathway" id="UPA00356">
    <property type="reaction ID" value="UER00439"/>
</dbReference>
<dbReference type="Proteomes" id="UP000008322">
    <property type="component" value="Chromosome"/>
</dbReference>
<dbReference type="GO" id="GO:0005829">
    <property type="term" value="C:cytosol"/>
    <property type="evidence" value="ECO:0007669"/>
    <property type="project" value="TreeGrafter"/>
</dbReference>
<dbReference type="GO" id="GO:0005524">
    <property type="term" value="F:ATP binding"/>
    <property type="evidence" value="ECO:0007669"/>
    <property type="project" value="UniProtKB-UniRule"/>
</dbReference>
<dbReference type="GO" id="GO:0033785">
    <property type="term" value="F:heptose 7-phosphate kinase activity"/>
    <property type="evidence" value="ECO:0007669"/>
    <property type="project" value="UniProtKB-UniRule"/>
</dbReference>
<dbReference type="GO" id="GO:0033786">
    <property type="term" value="F:heptose-1-phosphate adenylyltransferase activity"/>
    <property type="evidence" value="ECO:0007669"/>
    <property type="project" value="UniProtKB-UniRule"/>
</dbReference>
<dbReference type="GO" id="GO:0016773">
    <property type="term" value="F:phosphotransferase activity, alcohol group as acceptor"/>
    <property type="evidence" value="ECO:0007669"/>
    <property type="project" value="InterPro"/>
</dbReference>
<dbReference type="GO" id="GO:0097171">
    <property type="term" value="P:ADP-L-glycero-beta-D-manno-heptose biosynthetic process"/>
    <property type="evidence" value="ECO:0007669"/>
    <property type="project" value="UniProtKB-UniPathway"/>
</dbReference>
<dbReference type="CDD" id="cd01172">
    <property type="entry name" value="RfaE_like"/>
    <property type="match status" value="1"/>
</dbReference>
<dbReference type="FunFam" id="3.40.1190.20:FF:000002">
    <property type="entry name" value="Bifunctional protein HldE"/>
    <property type="match status" value="1"/>
</dbReference>
<dbReference type="FunFam" id="3.40.50.620:FF:000028">
    <property type="entry name" value="Bifunctional protein HldE"/>
    <property type="match status" value="1"/>
</dbReference>
<dbReference type="Gene3D" id="3.40.1190.20">
    <property type="match status" value="1"/>
</dbReference>
<dbReference type="Gene3D" id="3.40.50.620">
    <property type="entry name" value="HUPs"/>
    <property type="match status" value="1"/>
</dbReference>
<dbReference type="HAMAP" id="MF_01603">
    <property type="entry name" value="HldE"/>
    <property type="match status" value="1"/>
</dbReference>
<dbReference type="InterPro" id="IPR023030">
    <property type="entry name" value="Bifunc_HldE"/>
</dbReference>
<dbReference type="InterPro" id="IPR002173">
    <property type="entry name" value="Carboh/pur_kinase_PfkB_CS"/>
</dbReference>
<dbReference type="InterPro" id="IPR004821">
    <property type="entry name" value="Cyt_trans-like"/>
</dbReference>
<dbReference type="InterPro" id="IPR011611">
    <property type="entry name" value="PfkB_dom"/>
</dbReference>
<dbReference type="InterPro" id="IPR011913">
    <property type="entry name" value="RfaE_dom_I"/>
</dbReference>
<dbReference type="InterPro" id="IPR011914">
    <property type="entry name" value="RfaE_dom_II"/>
</dbReference>
<dbReference type="InterPro" id="IPR029056">
    <property type="entry name" value="Ribokinase-like"/>
</dbReference>
<dbReference type="InterPro" id="IPR014729">
    <property type="entry name" value="Rossmann-like_a/b/a_fold"/>
</dbReference>
<dbReference type="NCBIfam" id="TIGR00125">
    <property type="entry name" value="cyt_tran_rel"/>
    <property type="match status" value="1"/>
</dbReference>
<dbReference type="NCBIfam" id="NF008454">
    <property type="entry name" value="PRK11316.1"/>
    <property type="match status" value="1"/>
</dbReference>
<dbReference type="NCBIfam" id="TIGR02198">
    <property type="entry name" value="rfaE_dom_I"/>
    <property type="match status" value="1"/>
</dbReference>
<dbReference type="NCBIfam" id="TIGR02199">
    <property type="entry name" value="rfaE_dom_II"/>
    <property type="match status" value="1"/>
</dbReference>
<dbReference type="PANTHER" id="PTHR46969">
    <property type="entry name" value="BIFUNCTIONAL PROTEIN HLDE"/>
    <property type="match status" value="1"/>
</dbReference>
<dbReference type="PANTHER" id="PTHR46969:SF1">
    <property type="entry name" value="BIFUNCTIONAL PROTEIN HLDE"/>
    <property type="match status" value="1"/>
</dbReference>
<dbReference type="Pfam" id="PF01467">
    <property type="entry name" value="CTP_transf_like"/>
    <property type="match status" value="1"/>
</dbReference>
<dbReference type="Pfam" id="PF00294">
    <property type="entry name" value="PfkB"/>
    <property type="match status" value="1"/>
</dbReference>
<dbReference type="SUPFAM" id="SSF52374">
    <property type="entry name" value="Nucleotidylyl transferase"/>
    <property type="match status" value="1"/>
</dbReference>
<dbReference type="SUPFAM" id="SSF53613">
    <property type="entry name" value="Ribokinase-like"/>
    <property type="match status" value="1"/>
</dbReference>
<dbReference type="PROSITE" id="PS00583">
    <property type="entry name" value="PFKB_KINASES_1"/>
    <property type="match status" value="1"/>
</dbReference>
<evidence type="ECO:0000255" key="1">
    <source>
        <dbReference type="HAMAP-Rule" id="MF_01603"/>
    </source>
</evidence>
<accession>B5FHT5</accession>
<gene>
    <name evidence="1" type="primary">hldE</name>
    <name type="ordered locus">SeD_A3556</name>
</gene>
<proteinExistence type="inferred from homology"/>
<feature type="chain" id="PRO_1000185815" description="Bifunctional protein HldE">
    <location>
        <begin position="1"/>
        <end position="477"/>
    </location>
</feature>
<feature type="region of interest" description="Ribokinase">
    <location>
        <begin position="1"/>
        <end position="318"/>
    </location>
</feature>
<feature type="region of interest" description="Cytidylyltransferase">
    <location>
        <begin position="344"/>
        <end position="477"/>
    </location>
</feature>
<feature type="active site" evidence="1">
    <location>
        <position position="264"/>
    </location>
</feature>
<feature type="binding site" evidence="1">
    <location>
        <begin position="195"/>
        <end position="198"/>
    </location>
    <ligand>
        <name>ATP</name>
        <dbReference type="ChEBI" id="CHEBI:30616"/>
    </ligand>
</feature>
<protein>
    <recommendedName>
        <fullName evidence="1">Bifunctional protein HldE</fullName>
    </recommendedName>
    <domain>
        <recommendedName>
            <fullName evidence="1">D-beta-D-heptose 7-phosphate kinase</fullName>
            <ecNumber evidence="1">2.7.1.167</ecNumber>
        </recommendedName>
        <alternativeName>
            <fullName evidence="1">D-beta-D-heptose 7-phosphotransferase</fullName>
        </alternativeName>
        <alternativeName>
            <fullName evidence="1">D-glycero-beta-D-manno-heptose-7-phosphate kinase</fullName>
        </alternativeName>
    </domain>
    <domain>
        <recommendedName>
            <fullName evidence="1">D-beta-D-heptose 1-phosphate adenylyltransferase</fullName>
            <ecNumber evidence="1">2.7.7.70</ecNumber>
        </recommendedName>
        <alternativeName>
            <fullName evidence="1">D-glycero-beta-D-manno-heptose 1-phosphate adenylyltransferase</fullName>
        </alternativeName>
    </domain>
</protein>